<accession>P09908</accession>
<feature type="chain" id="PRO_0000052729" description="Hemoglobin subunit alpha">
    <location>
        <begin position="1"/>
        <end position="141"/>
    </location>
</feature>
<feature type="peptide" id="PRO_0000455924" description="Hemopressin" evidence="2">
    <location>
        <begin position="95"/>
        <end position="103"/>
    </location>
</feature>
<feature type="domain" description="Globin" evidence="4">
    <location>
        <begin position="1"/>
        <end position="141"/>
    </location>
</feature>
<feature type="binding site" evidence="4">
    <location>
        <position position="58"/>
    </location>
    <ligand>
        <name>O2</name>
        <dbReference type="ChEBI" id="CHEBI:15379"/>
    </ligand>
</feature>
<feature type="binding site" description="proximal binding residue" evidence="4">
    <location>
        <position position="87"/>
    </location>
    <ligand>
        <name>heme b</name>
        <dbReference type="ChEBI" id="CHEBI:60344"/>
    </ligand>
    <ligandPart>
        <name>Fe</name>
        <dbReference type="ChEBI" id="CHEBI:18248"/>
    </ligandPart>
</feature>
<feature type="modified residue" description="Phosphoserine" evidence="3">
    <location>
        <position position="3"/>
    </location>
</feature>
<feature type="modified residue" description="N6-succinyllysine" evidence="1">
    <location>
        <position position="7"/>
    </location>
</feature>
<feature type="modified residue" description="Phosphothreonine" evidence="3">
    <location>
        <position position="8"/>
    </location>
</feature>
<feature type="modified residue" description="N6-succinyllysine" evidence="1">
    <location>
        <position position="11"/>
    </location>
</feature>
<feature type="modified residue" description="N6-acetyllysine; alternate" evidence="3">
    <location>
        <position position="16"/>
    </location>
</feature>
<feature type="modified residue" description="N6-succinyllysine; alternate" evidence="1">
    <location>
        <position position="16"/>
    </location>
</feature>
<feature type="modified residue" description="Phosphotyrosine" evidence="3">
    <location>
        <position position="24"/>
    </location>
</feature>
<feature type="modified residue" description="N6-succinyllysine" evidence="1">
    <location>
        <position position="40"/>
    </location>
</feature>
<feature type="modified residue" description="Phosphoserine" evidence="3">
    <location>
        <position position="49"/>
    </location>
</feature>
<feature type="modified residue" description="Phosphoserine" evidence="1">
    <location>
        <position position="102"/>
    </location>
</feature>
<feature type="modified residue" description="Phosphothreonine" evidence="1">
    <location>
        <position position="108"/>
    </location>
</feature>
<feature type="modified residue" description="Phosphoserine" evidence="1">
    <location>
        <position position="124"/>
    </location>
</feature>
<feature type="modified residue" description="Phosphothreonine" evidence="1">
    <location>
        <position position="134"/>
    </location>
</feature>
<feature type="modified residue" description="Phosphothreonine" evidence="1">
    <location>
        <position position="137"/>
    </location>
</feature>
<feature type="modified residue" description="Phosphoserine" evidence="1">
    <location>
        <position position="138"/>
    </location>
</feature>
<proteinExistence type="evidence at protein level"/>
<evidence type="ECO:0000250" key="1">
    <source>
        <dbReference type="UniProtKB" id="P01942"/>
    </source>
</evidence>
<evidence type="ECO:0000250" key="2">
    <source>
        <dbReference type="UniProtKB" id="P01946"/>
    </source>
</evidence>
<evidence type="ECO:0000250" key="3">
    <source>
        <dbReference type="UniProtKB" id="P69905"/>
    </source>
</evidence>
<evidence type="ECO:0000255" key="4">
    <source>
        <dbReference type="PROSITE-ProRule" id="PRU00238"/>
    </source>
</evidence>
<protein>
    <recommendedName>
        <fullName>Hemoglobin subunit alpha</fullName>
    </recommendedName>
    <alternativeName>
        <fullName>Alpha-globin</fullName>
    </alternativeName>
    <alternativeName>
        <fullName>Hemoglobin alpha chain</fullName>
    </alternativeName>
    <component>
        <recommendedName>
            <fullName evidence="2">Hemopressin</fullName>
        </recommendedName>
    </component>
</protein>
<comment type="function">
    <text>Involved in oxygen transport from the lung to the various peripheral tissues.</text>
</comment>
<comment type="function">
    <molecule>Hemopressin</molecule>
    <text evidence="2">Hemopressin acts as an antagonist peptide of the cannabinoid receptor CNR1. Hemopressin-binding efficiently blocks cannabinoid receptor CNR1 and subsequent signaling.</text>
</comment>
<comment type="subunit">
    <text>Heterotetramer of two alpha chains and two beta chains.</text>
</comment>
<comment type="tissue specificity">
    <text>Red blood cells.</text>
</comment>
<comment type="similarity">
    <text evidence="4">Belongs to the globin family.</text>
</comment>
<keyword id="KW-0007">Acetylation</keyword>
<keyword id="KW-0903">Direct protein sequencing</keyword>
<keyword id="KW-0349">Heme</keyword>
<keyword id="KW-0408">Iron</keyword>
<keyword id="KW-0479">Metal-binding</keyword>
<keyword id="KW-0561">Oxygen transport</keyword>
<keyword id="KW-0597">Phosphoprotein</keyword>
<keyword id="KW-0813">Transport</keyword>
<gene>
    <name type="primary">HBA</name>
</gene>
<reference key="1">
    <citation type="journal article" date="1986" name="Biol. Chem. Hoppe-Seyler">
        <title>Amino-acid sequence of the alpha and beta chains of adult hemoglobin of the harbor seal, Phoca vitulina.</title>
        <authorList>
            <person name="Watanabe B."/>
            <person name="Maita T."/>
            <person name="Matsuda G."/>
            <person name="Goodman M."/>
            <person name="Johnson M.L."/>
        </authorList>
    </citation>
    <scope>PROTEIN SEQUENCE</scope>
</reference>
<name>HBA_PHOVI</name>
<dbReference type="PIR" id="A25358">
    <property type="entry name" value="A25358"/>
</dbReference>
<dbReference type="SMR" id="P09908"/>
<dbReference type="GO" id="GO:0072562">
    <property type="term" value="C:blood microparticle"/>
    <property type="evidence" value="ECO:0007669"/>
    <property type="project" value="TreeGrafter"/>
</dbReference>
<dbReference type="GO" id="GO:0031838">
    <property type="term" value="C:haptoglobin-hemoglobin complex"/>
    <property type="evidence" value="ECO:0007669"/>
    <property type="project" value="TreeGrafter"/>
</dbReference>
<dbReference type="GO" id="GO:0005833">
    <property type="term" value="C:hemoglobin complex"/>
    <property type="evidence" value="ECO:0007669"/>
    <property type="project" value="InterPro"/>
</dbReference>
<dbReference type="GO" id="GO:0031720">
    <property type="term" value="F:haptoglobin binding"/>
    <property type="evidence" value="ECO:0007669"/>
    <property type="project" value="TreeGrafter"/>
</dbReference>
<dbReference type="GO" id="GO:0020037">
    <property type="term" value="F:heme binding"/>
    <property type="evidence" value="ECO:0007669"/>
    <property type="project" value="InterPro"/>
</dbReference>
<dbReference type="GO" id="GO:0005506">
    <property type="term" value="F:iron ion binding"/>
    <property type="evidence" value="ECO:0007669"/>
    <property type="project" value="InterPro"/>
</dbReference>
<dbReference type="GO" id="GO:0043177">
    <property type="term" value="F:organic acid binding"/>
    <property type="evidence" value="ECO:0007669"/>
    <property type="project" value="TreeGrafter"/>
</dbReference>
<dbReference type="GO" id="GO:0019825">
    <property type="term" value="F:oxygen binding"/>
    <property type="evidence" value="ECO:0007669"/>
    <property type="project" value="InterPro"/>
</dbReference>
<dbReference type="GO" id="GO:0005344">
    <property type="term" value="F:oxygen carrier activity"/>
    <property type="evidence" value="ECO:0007669"/>
    <property type="project" value="UniProtKB-KW"/>
</dbReference>
<dbReference type="GO" id="GO:0004601">
    <property type="term" value="F:peroxidase activity"/>
    <property type="evidence" value="ECO:0007669"/>
    <property type="project" value="TreeGrafter"/>
</dbReference>
<dbReference type="GO" id="GO:0042744">
    <property type="term" value="P:hydrogen peroxide catabolic process"/>
    <property type="evidence" value="ECO:0007669"/>
    <property type="project" value="TreeGrafter"/>
</dbReference>
<dbReference type="CDD" id="cd08927">
    <property type="entry name" value="Hb-alpha-like"/>
    <property type="match status" value="1"/>
</dbReference>
<dbReference type="FunFam" id="1.10.490.10:FF:000002">
    <property type="entry name" value="Hemoglobin subunit alpha"/>
    <property type="match status" value="1"/>
</dbReference>
<dbReference type="Gene3D" id="1.10.490.10">
    <property type="entry name" value="Globins"/>
    <property type="match status" value="1"/>
</dbReference>
<dbReference type="InterPro" id="IPR000971">
    <property type="entry name" value="Globin"/>
</dbReference>
<dbReference type="InterPro" id="IPR009050">
    <property type="entry name" value="Globin-like_sf"/>
</dbReference>
<dbReference type="InterPro" id="IPR012292">
    <property type="entry name" value="Globin/Proto"/>
</dbReference>
<dbReference type="InterPro" id="IPR002338">
    <property type="entry name" value="Hemoglobin_a-typ"/>
</dbReference>
<dbReference type="InterPro" id="IPR050056">
    <property type="entry name" value="Hemoglobin_oxygen_transport"/>
</dbReference>
<dbReference type="InterPro" id="IPR002339">
    <property type="entry name" value="Hemoglobin_pi"/>
</dbReference>
<dbReference type="PANTHER" id="PTHR11442">
    <property type="entry name" value="HEMOGLOBIN FAMILY MEMBER"/>
    <property type="match status" value="1"/>
</dbReference>
<dbReference type="PANTHER" id="PTHR11442:SF48">
    <property type="entry name" value="HEMOGLOBIN SUBUNIT ALPHA"/>
    <property type="match status" value="1"/>
</dbReference>
<dbReference type="Pfam" id="PF00042">
    <property type="entry name" value="Globin"/>
    <property type="match status" value="1"/>
</dbReference>
<dbReference type="PRINTS" id="PR00612">
    <property type="entry name" value="ALPHAHAEM"/>
</dbReference>
<dbReference type="PRINTS" id="PR00815">
    <property type="entry name" value="PIHAEM"/>
</dbReference>
<dbReference type="SUPFAM" id="SSF46458">
    <property type="entry name" value="Globin-like"/>
    <property type="match status" value="1"/>
</dbReference>
<dbReference type="PROSITE" id="PS01033">
    <property type="entry name" value="GLOBIN"/>
    <property type="match status" value="1"/>
</dbReference>
<organism>
    <name type="scientific">Phoca vitulina</name>
    <name type="common">Harbor seal</name>
    <dbReference type="NCBI Taxonomy" id="9720"/>
    <lineage>
        <taxon>Eukaryota</taxon>
        <taxon>Metazoa</taxon>
        <taxon>Chordata</taxon>
        <taxon>Craniata</taxon>
        <taxon>Vertebrata</taxon>
        <taxon>Euteleostomi</taxon>
        <taxon>Mammalia</taxon>
        <taxon>Eutheria</taxon>
        <taxon>Laurasiatheria</taxon>
        <taxon>Carnivora</taxon>
        <taxon>Caniformia</taxon>
        <taxon>Pinnipedia</taxon>
        <taxon>Phocidae</taxon>
        <taxon>Phocinae</taxon>
        <taxon>Phoca</taxon>
    </lineage>
</organism>
<sequence length="141" mass="15176">VLSPADKTNVKATWDKIGGHAGEYGGEALERTFTAFPTTKTYFPHFDLSHGSAQVKAHGKKVADALTTAVAHMDDLPGALSALSDLHAHKLRVDPVNFKLLSHCLLVTLACHHPADFTPAVHASLDKFFSAVSTVLTSKYR</sequence>